<gene>
    <name type="primary">lrrc40</name>
    <name type="ORF">zgc:63729</name>
</gene>
<keyword id="KW-0433">Leucine-rich repeat</keyword>
<keyword id="KW-1185">Reference proteome</keyword>
<keyword id="KW-0677">Repeat</keyword>
<proteinExistence type="evidence at transcript level"/>
<name>LRC40_DANRE</name>
<reference key="1">
    <citation type="journal article" date="2004" name="Proc. Natl. Acad. Sci. U.S.A.">
        <title>Hematopoietic gene expression profile in zebrafish kidney marrow.</title>
        <authorList>
            <person name="Song H.-D."/>
            <person name="Sun X.-J."/>
            <person name="Deng M."/>
            <person name="Zhang G.-W."/>
            <person name="Zhou Y."/>
            <person name="Wu X.-Y."/>
            <person name="Sheng Y."/>
            <person name="Chen Y."/>
            <person name="Ruan Z."/>
            <person name="Jiang C.-L."/>
            <person name="Fan H.-Y."/>
            <person name="Zon L.I."/>
            <person name="Kanki J.P."/>
            <person name="Liu T.X."/>
            <person name="Look A.T."/>
            <person name="Chen Z."/>
        </authorList>
    </citation>
    <scope>NUCLEOTIDE SEQUENCE [LARGE SCALE MRNA]</scope>
    <source>
        <tissue>Kidney marrow</tissue>
    </source>
</reference>
<reference key="2">
    <citation type="submission" date="2003-07" db="EMBL/GenBank/DDBJ databases">
        <authorList>
            <consortium name="NIH - Zebrafish Gene Collection (ZGC) project"/>
        </authorList>
    </citation>
    <scope>NUCLEOTIDE SEQUENCE [LARGE SCALE MRNA]</scope>
    <source>
        <strain>AB</strain>
    </source>
</reference>
<accession>Q7SXW3</accession>
<accession>Q6TLH1</accession>
<dbReference type="EMBL" id="AY394934">
    <property type="protein sequence ID" value="AAQ94561.1"/>
    <property type="molecule type" value="mRNA"/>
</dbReference>
<dbReference type="EMBL" id="BC055223">
    <property type="protein sequence ID" value="AAH55223.1"/>
    <property type="molecule type" value="mRNA"/>
</dbReference>
<dbReference type="RefSeq" id="NP_956156.2">
    <property type="nucleotide sequence ID" value="NM_199862.2"/>
</dbReference>
<dbReference type="SMR" id="Q7SXW3"/>
<dbReference type="FunCoup" id="Q7SXW3">
    <property type="interactions" value="957"/>
</dbReference>
<dbReference type="STRING" id="7955.ENSDARP00000016699"/>
<dbReference type="PaxDb" id="7955-ENSDARP00000016699"/>
<dbReference type="GeneID" id="334130"/>
<dbReference type="KEGG" id="dre:334130"/>
<dbReference type="AGR" id="ZFIN:ZDB-GENE-030131-6062"/>
<dbReference type="CTD" id="55631"/>
<dbReference type="ZFIN" id="ZDB-GENE-030131-6062">
    <property type="gene designation" value="lrrc40"/>
</dbReference>
<dbReference type="eggNOG" id="KOG0472">
    <property type="taxonomic scope" value="Eukaryota"/>
</dbReference>
<dbReference type="InParanoid" id="Q7SXW3"/>
<dbReference type="OrthoDB" id="660555at2759"/>
<dbReference type="PhylomeDB" id="Q7SXW3"/>
<dbReference type="PRO" id="PR:Q7SXW3"/>
<dbReference type="Proteomes" id="UP000000437">
    <property type="component" value="Chromosome 6"/>
</dbReference>
<dbReference type="GO" id="GO:0035556">
    <property type="term" value="P:intracellular signal transduction"/>
    <property type="evidence" value="ECO:0000318"/>
    <property type="project" value="GO_Central"/>
</dbReference>
<dbReference type="FunFam" id="3.80.10.10:FF:000116">
    <property type="entry name" value="Leucine-rich repeat-containing protein 40"/>
    <property type="match status" value="1"/>
</dbReference>
<dbReference type="FunFam" id="3.80.10.10:FF:000193">
    <property type="entry name" value="Leucine-rich repeat-containing protein 40"/>
    <property type="match status" value="1"/>
</dbReference>
<dbReference type="FunFam" id="3.80.10.10:FF:000265">
    <property type="entry name" value="Leucine-rich repeat-containing protein 40"/>
    <property type="match status" value="1"/>
</dbReference>
<dbReference type="FunFam" id="3.80.10.10:FF:000206">
    <property type="entry name" value="leucine-rich repeat-containing protein 40"/>
    <property type="match status" value="1"/>
</dbReference>
<dbReference type="Gene3D" id="3.80.10.10">
    <property type="entry name" value="Ribonuclease Inhibitor"/>
    <property type="match status" value="4"/>
</dbReference>
<dbReference type="InterPro" id="IPR001611">
    <property type="entry name" value="Leu-rich_rpt"/>
</dbReference>
<dbReference type="InterPro" id="IPR003591">
    <property type="entry name" value="Leu-rich_rpt_typical-subtyp"/>
</dbReference>
<dbReference type="InterPro" id="IPR032675">
    <property type="entry name" value="LRR_dom_sf"/>
</dbReference>
<dbReference type="InterPro" id="IPR050216">
    <property type="entry name" value="LRR_domain-containing"/>
</dbReference>
<dbReference type="InterPro" id="IPR055414">
    <property type="entry name" value="LRR_R13L4/SHOC2-like"/>
</dbReference>
<dbReference type="PANTHER" id="PTHR48051">
    <property type="match status" value="1"/>
</dbReference>
<dbReference type="PANTHER" id="PTHR48051:SF1">
    <property type="entry name" value="RAS SUPPRESSOR PROTEIN 1"/>
    <property type="match status" value="1"/>
</dbReference>
<dbReference type="Pfam" id="PF23598">
    <property type="entry name" value="LRR_14"/>
    <property type="match status" value="1"/>
</dbReference>
<dbReference type="Pfam" id="PF13855">
    <property type="entry name" value="LRR_8"/>
    <property type="match status" value="4"/>
</dbReference>
<dbReference type="PRINTS" id="PR00019">
    <property type="entry name" value="LEURICHRPT"/>
</dbReference>
<dbReference type="SMART" id="SM00364">
    <property type="entry name" value="LRR_BAC"/>
    <property type="match status" value="7"/>
</dbReference>
<dbReference type="SMART" id="SM00365">
    <property type="entry name" value="LRR_SD22"/>
    <property type="match status" value="8"/>
</dbReference>
<dbReference type="SMART" id="SM00369">
    <property type="entry name" value="LRR_TYP"/>
    <property type="match status" value="14"/>
</dbReference>
<dbReference type="SUPFAM" id="SSF52058">
    <property type="entry name" value="L domain-like"/>
    <property type="match status" value="2"/>
</dbReference>
<dbReference type="PROSITE" id="PS51450">
    <property type="entry name" value="LRR"/>
    <property type="match status" value="17"/>
</dbReference>
<sequence length="601" mass="67316">MSRFKRGAHVDSGAGFRQEKEDCPVPYGLLKAARKSGQLNLSGRGLTEVPASVWRLNLDTPQEAKQNVSFGAEDRWWEQTDLTKLLLSSNKLQSIPDDVKLLPALVVLDIHDNQLSSLPDSIGDLEQLQKLILSHNKLTELPSGVWRLTNLRCLHLQQNLIEQIPRDLGQLVNLDELDLSNNHLIDIPESLANLQNLVKLDLSCNKLKSLPPAISQMKNLRMLDCSRNQMESIPPVLAQMESLEQLYLRHNKLRYLPELPCCKTLKELHCGNNQIEVLEAEHLKHLNALSLLELRDNKVKSLPEEITLLQGLERLDLTNNDISSLPCGLGTLPKLKSLSLEGNPLRAIRRDLLTKGTGELLKYLRSRVQEPPNGGLKEEPKTAMTFPSQAKINVHAIKTLKTLDYSEKQDATIPDDVFDAVDGNPVANVNFSKNQLTAVPHRIVDLKDSLADINLGFNKLTTIPADFCHLKQLMHIDLRNNLLISLPMELEGLIKLRSVILSFNRFKSFPEVLYRIPSLETILISSNQVGGIDAVQMKTLSRLSTLDLSNNDIMQVPPELGNCTSLRALMLDGNPFRNPRAAILIKGTDAVLEYLRSRIPT</sequence>
<organism>
    <name type="scientific">Danio rerio</name>
    <name type="common">Zebrafish</name>
    <name type="synonym">Brachydanio rerio</name>
    <dbReference type="NCBI Taxonomy" id="7955"/>
    <lineage>
        <taxon>Eukaryota</taxon>
        <taxon>Metazoa</taxon>
        <taxon>Chordata</taxon>
        <taxon>Craniata</taxon>
        <taxon>Vertebrata</taxon>
        <taxon>Euteleostomi</taxon>
        <taxon>Actinopterygii</taxon>
        <taxon>Neopterygii</taxon>
        <taxon>Teleostei</taxon>
        <taxon>Ostariophysi</taxon>
        <taxon>Cypriniformes</taxon>
        <taxon>Danionidae</taxon>
        <taxon>Danioninae</taxon>
        <taxon>Danio</taxon>
    </lineage>
</organism>
<feature type="chain" id="PRO_0000226262" description="Leucine-rich repeat-containing protein 40">
    <location>
        <begin position="1"/>
        <end position="601"/>
    </location>
</feature>
<feature type="repeat" description="LRR 1">
    <location>
        <begin position="33"/>
        <end position="56"/>
    </location>
</feature>
<feature type="repeat" description="LRR 2">
    <location>
        <begin position="79"/>
        <end position="101"/>
    </location>
</feature>
<feature type="repeat" description="LRR 3">
    <location>
        <begin position="102"/>
        <end position="124"/>
    </location>
</feature>
<feature type="repeat" description="LRR 4">
    <location>
        <begin position="125"/>
        <end position="148"/>
    </location>
</feature>
<feature type="repeat" description="LRR 5">
    <location>
        <begin position="150"/>
        <end position="170"/>
    </location>
</feature>
<feature type="repeat" description="LRR 6">
    <location>
        <begin position="171"/>
        <end position="193"/>
    </location>
</feature>
<feature type="repeat" description="LRR 7">
    <location>
        <begin position="194"/>
        <end position="217"/>
    </location>
</feature>
<feature type="repeat" description="LRR 8">
    <location>
        <begin position="219"/>
        <end position="239"/>
    </location>
</feature>
<feature type="repeat" description="LRR 9">
    <location>
        <begin position="240"/>
        <end position="264"/>
    </location>
</feature>
<feature type="repeat" description="LRR 10">
    <location>
        <begin position="266"/>
        <end position="285"/>
    </location>
</feature>
<feature type="repeat" description="LRR 11">
    <location>
        <begin position="286"/>
        <end position="308"/>
    </location>
</feature>
<feature type="repeat" description="LRR 12">
    <location>
        <begin position="309"/>
        <end position="334"/>
    </location>
</feature>
<feature type="repeat" description="LRR 13">
    <location>
        <begin position="336"/>
        <end position="355"/>
    </location>
</feature>
<feature type="repeat" description="LRR 14">
    <location>
        <begin position="397"/>
        <end position="420"/>
    </location>
</feature>
<feature type="repeat" description="LRR 15">
    <location>
        <begin position="423"/>
        <end position="446"/>
    </location>
</feature>
<feature type="repeat" description="LRR 16">
    <location>
        <begin position="447"/>
        <end position="469"/>
    </location>
</feature>
<feature type="repeat" description="LRR 17">
    <location>
        <begin position="470"/>
        <end position="492"/>
    </location>
</feature>
<feature type="repeat" description="LRR 18">
    <location>
        <begin position="493"/>
        <end position="516"/>
    </location>
</feature>
<feature type="repeat" description="LRR 19">
    <location>
        <begin position="518"/>
        <end position="539"/>
    </location>
</feature>
<feature type="repeat" description="LRR 20">
    <location>
        <begin position="540"/>
        <end position="563"/>
    </location>
</feature>
<feature type="repeat" description="LRR 21">
    <location>
        <begin position="565"/>
        <end position="586"/>
    </location>
</feature>
<feature type="sequence conflict" description="In Ref. 1; AAQ94561." evidence="1" ref="1">
    <original>G</original>
    <variation>R</variation>
    <location>
        <position position="13"/>
    </location>
</feature>
<feature type="sequence conflict" description="In Ref. 1; AAQ94561." evidence="1" ref="1">
    <original>E</original>
    <variation>D</variation>
    <location>
        <position position="176"/>
    </location>
</feature>
<feature type="sequence conflict" description="In Ref. 1; AAQ94561." evidence="1" ref="1">
    <original>P</original>
    <variation>Q</variation>
    <location>
        <position position="387"/>
    </location>
</feature>
<feature type="sequence conflict" description="In Ref. 1; AAQ94561." evidence="1" ref="1">
    <original>V</original>
    <variation>I</variation>
    <location>
        <position position="394"/>
    </location>
</feature>
<feature type="sequence conflict" description="In Ref. 1; AAQ94561." evidence="1" ref="1">
    <original>T</original>
    <variation>S</variation>
    <location>
        <position position="412"/>
    </location>
</feature>
<feature type="sequence conflict" description="In Ref. 1; AAQ94561." evidence="1" ref="1">
    <original>F</original>
    <variation>L</variation>
    <location>
        <position position="418"/>
    </location>
</feature>
<feature type="sequence conflict" description="In Ref. 1; AAQ94561." evidence="1" ref="1">
    <original>S</original>
    <variation>T</variation>
    <location>
        <position position="449"/>
    </location>
</feature>
<evidence type="ECO:0000305" key="1"/>
<protein>
    <recommendedName>
        <fullName>Leucine-rich repeat-containing protein 40</fullName>
    </recommendedName>
</protein>